<name>GLYA_PORG3</name>
<dbReference type="EC" id="2.1.2.1" evidence="1"/>
<dbReference type="EMBL" id="AP009380">
    <property type="protein sequence ID" value="BAG32557.1"/>
    <property type="molecule type" value="Genomic_DNA"/>
</dbReference>
<dbReference type="RefSeq" id="WP_004583439.1">
    <property type="nucleotide sequence ID" value="NZ_CP025930.1"/>
</dbReference>
<dbReference type="SMR" id="B2RGR2"/>
<dbReference type="GeneID" id="29255296"/>
<dbReference type="KEGG" id="pgn:PGN_0038"/>
<dbReference type="eggNOG" id="COG0112">
    <property type="taxonomic scope" value="Bacteria"/>
</dbReference>
<dbReference type="HOGENOM" id="CLU_022477_2_1_10"/>
<dbReference type="OrthoDB" id="9803846at2"/>
<dbReference type="BioCyc" id="PGIN431947:G1G2V-40-MONOMER"/>
<dbReference type="UniPathway" id="UPA00193"/>
<dbReference type="UniPathway" id="UPA00288">
    <property type="reaction ID" value="UER01023"/>
</dbReference>
<dbReference type="Proteomes" id="UP000008842">
    <property type="component" value="Chromosome"/>
</dbReference>
<dbReference type="GO" id="GO:0005829">
    <property type="term" value="C:cytosol"/>
    <property type="evidence" value="ECO:0007669"/>
    <property type="project" value="TreeGrafter"/>
</dbReference>
<dbReference type="GO" id="GO:0004372">
    <property type="term" value="F:glycine hydroxymethyltransferase activity"/>
    <property type="evidence" value="ECO:0007669"/>
    <property type="project" value="UniProtKB-UniRule"/>
</dbReference>
<dbReference type="GO" id="GO:0030170">
    <property type="term" value="F:pyridoxal phosphate binding"/>
    <property type="evidence" value="ECO:0007669"/>
    <property type="project" value="UniProtKB-UniRule"/>
</dbReference>
<dbReference type="GO" id="GO:0019264">
    <property type="term" value="P:glycine biosynthetic process from serine"/>
    <property type="evidence" value="ECO:0007669"/>
    <property type="project" value="UniProtKB-UniRule"/>
</dbReference>
<dbReference type="GO" id="GO:0035999">
    <property type="term" value="P:tetrahydrofolate interconversion"/>
    <property type="evidence" value="ECO:0007669"/>
    <property type="project" value="UniProtKB-UniRule"/>
</dbReference>
<dbReference type="CDD" id="cd00378">
    <property type="entry name" value="SHMT"/>
    <property type="match status" value="1"/>
</dbReference>
<dbReference type="FunFam" id="3.40.640.10:FF:000001">
    <property type="entry name" value="Serine hydroxymethyltransferase"/>
    <property type="match status" value="1"/>
</dbReference>
<dbReference type="Gene3D" id="3.90.1150.10">
    <property type="entry name" value="Aspartate Aminotransferase, domain 1"/>
    <property type="match status" value="1"/>
</dbReference>
<dbReference type="Gene3D" id="3.40.640.10">
    <property type="entry name" value="Type I PLP-dependent aspartate aminotransferase-like (Major domain)"/>
    <property type="match status" value="1"/>
</dbReference>
<dbReference type="HAMAP" id="MF_00051">
    <property type="entry name" value="SHMT"/>
    <property type="match status" value="1"/>
</dbReference>
<dbReference type="InterPro" id="IPR015424">
    <property type="entry name" value="PyrdxlP-dep_Trfase"/>
</dbReference>
<dbReference type="InterPro" id="IPR015421">
    <property type="entry name" value="PyrdxlP-dep_Trfase_major"/>
</dbReference>
<dbReference type="InterPro" id="IPR015422">
    <property type="entry name" value="PyrdxlP-dep_Trfase_small"/>
</dbReference>
<dbReference type="InterPro" id="IPR001085">
    <property type="entry name" value="Ser_HO-MeTrfase"/>
</dbReference>
<dbReference type="InterPro" id="IPR049943">
    <property type="entry name" value="Ser_HO-MeTrfase-like"/>
</dbReference>
<dbReference type="InterPro" id="IPR019798">
    <property type="entry name" value="Ser_HO-MeTrfase_PLP_BS"/>
</dbReference>
<dbReference type="InterPro" id="IPR039429">
    <property type="entry name" value="SHMT-like_dom"/>
</dbReference>
<dbReference type="NCBIfam" id="NF000586">
    <property type="entry name" value="PRK00011.1"/>
    <property type="match status" value="1"/>
</dbReference>
<dbReference type="PANTHER" id="PTHR11680">
    <property type="entry name" value="SERINE HYDROXYMETHYLTRANSFERASE"/>
    <property type="match status" value="1"/>
</dbReference>
<dbReference type="PANTHER" id="PTHR11680:SF35">
    <property type="entry name" value="SERINE HYDROXYMETHYLTRANSFERASE 1"/>
    <property type="match status" value="1"/>
</dbReference>
<dbReference type="Pfam" id="PF00464">
    <property type="entry name" value="SHMT"/>
    <property type="match status" value="1"/>
</dbReference>
<dbReference type="PIRSF" id="PIRSF000412">
    <property type="entry name" value="SHMT"/>
    <property type="match status" value="1"/>
</dbReference>
<dbReference type="SUPFAM" id="SSF53383">
    <property type="entry name" value="PLP-dependent transferases"/>
    <property type="match status" value="1"/>
</dbReference>
<dbReference type="PROSITE" id="PS00096">
    <property type="entry name" value="SHMT"/>
    <property type="match status" value="1"/>
</dbReference>
<gene>
    <name evidence="1" type="primary">glyA</name>
    <name type="ordered locus">PGN_0038</name>
</gene>
<sequence length="426" mass="46674">MKKDSVIFDLIEKEHQRQLKGIELIASENFVSEQVMQAMGSCMTNKYAEGYPGKRYYGGCEVVDQSEQIAIDRIKQLYGAEWANVQPHSGAQANMAVLLACLEAGDTFMGLNLEHGGHLSHGSLVNSSGILYRPIGYNLSEETGMVDYDHMEKMAIEHKPKLIIGGGSAYSREWDYKRMREIADKVGALLMIDMAHPAGLIAAGLLENPVKYAHIVTSTTHKTLRGPRGGIILMGKDFDNPWGKKTPKGEIKKMSALLDSAVFPGVQGGPLEHVIAAKAVAFGEALDPSFKEYQTQVKKNAAVLAQAFMDKGYKVISGGTDNHSMLIDLRPKFPELTGKVAEKALVAADITVNKNMVPFDSRSAFQTSGFRVGTPAITTRGVKEDKMGYIVELIDRVLSAPEDEAVIASVRTEVNRMMADYPLFAW</sequence>
<comment type="function">
    <text evidence="1">Catalyzes the reversible interconversion of serine and glycine with tetrahydrofolate (THF) serving as the one-carbon carrier. This reaction serves as the major source of one-carbon groups required for the biosynthesis of purines, thymidylate, methionine, and other important biomolecules. Also exhibits THF-independent aldolase activity toward beta-hydroxyamino acids, producing glycine and aldehydes, via a retro-aldol mechanism.</text>
</comment>
<comment type="catalytic activity">
    <reaction evidence="1">
        <text>(6R)-5,10-methylene-5,6,7,8-tetrahydrofolate + glycine + H2O = (6S)-5,6,7,8-tetrahydrofolate + L-serine</text>
        <dbReference type="Rhea" id="RHEA:15481"/>
        <dbReference type="ChEBI" id="CHEBI:15377"/>
        <dbReference type="ChEBI" id="CHEBI:15636"/>
        <dbReference type="ChEBI" id="CHEBI:33384"/>
        <dbReference type="ChEBI" id="CHEBI:57305"/>
        <dbReference type="ChEBI" id="CHEBI:57453"/>
        <dbReference type="EC" id="2.1.2.1"/>
    </reaction>
</comment>
<comment type="cofactor">
    <cofactor evidence="1">
        <name>pyridoxal 5'-phosphate</name>
        <dbReference type="ChEBI" id="CHEBI:597326"/>
    </cofactor>
</comment>
<comment type="pathway">
    <text evidence="1">One-carbon metabolism; tetrahydrofolate interconversion.</text>
</comment>
<comment type="pathway">
    <text evidence="1">Amino-acid biosynthesis; glycine biosynthesis; glycine from L-serine: step 1/1.</text>
</comment>
<comment type="subunit">
    <text evidence="1">Homodimer.</text>
</comment>
<comment type="subcellular location">
    <subcellularLocation>
        <location evidence="1">Cytoplasm</location>
    </subcellularLocation>
</comment>
<comment type="similarity">
    <text evidence="1">Belongs to the SHMT family.</text>
</comment>
<feature type="chain" id="PRO_1000091567" description="Serine hydroxymethyltransferase">
    <location>
        <begin position="1"/>
        <end position="426"/>
    </location>
</feature>
<feature type="binding site" evidence="1">
    <location>
        <position position="113"/>
    </location>
    <ligand>
        <name>(6S)-5,6,7,8-tetrahydrofolate</name>
        <dbReference type="ChEBI" id="CHEBI:57453"/>
    </ligand>
</feature>
<feature type="binding site" evidence="1">
    <location>
        <begin position="117"/>
        <end position="119"/>
    </location>
    <ligand>
        <name>(6S)-5,6,7,8-tetrahydrofolate</name>
        <dbReference type="ChEBI" id="CHEBI:57453"/>
    </ligand>
</feature>
<feature type="binding site" evidence="1">
    <location>
        <begin position="363"/>
        <end position="365"/>
    </location>
    <ligand>
        <name>(6S)-5,6,7,8-tetrahydrofolate</name>
        <dbReference type="ChEBI" id="CHEBI:57453"/>
    </ligand>
</feature>
<feature type="site" description="Plays an important role in substrate specificity" evidence="1">
    <location>
        <position position="221"/>
    </location>
</feature>
<feature type="modified residue" description="N6-(pyridoxal phosphate)lysine" evidence="1">
    <location>
        <position position="222"/>
    </location>
</feature>
<evidence type="ECO:0000255" key="1">
    <source>
        <dbReference type="HAMAP-Rule" id="MF_00051"/>
    </source>
</evidence>
<accession>B2RGR2</accession>
<protein>
    <recommendedName>
        <fullName evidence="1">Serine hydroxymethyltransferase</fullName>
        <shortName evidence="1">SHMT</shortName>
        <shortName evidence="1">Serine methylase</shortName>
        <ecNumber evidence="1">2.1.2.1</ecNumber>
    </recommendedName>
</protein>
<proteinExistence type="inferred from homology"/>
<organism>
    <name type="scientific">Porphyromonas gingivalis (strain ATCC 33277 / DSM 20709 / CIP 103683 / JCM 12257 / NCTC 11834 / 2561)</name>
    <dbReference type="NCBI Taxonomy" id="431947"/>
    <lineage>
        <taxon>Bacteria</taxon>
        <taxon>Pseudomonadati</taxon>
        <taxon>Bacteroidota</taxon>
        <taxon>Bacteroidia</taxon>
        <taxon>Bacteroidales</taxon>
        <taxon>Porphyromonadaceae</taxon>
        <taxon>Porphyromonas</taxon>
    </lineage>
</organism>
<keyword id="KW-0028">Amino-acid biosynthesis</keyword>
<keyword id="KW-0963">Cytoplasm</keyword>
<keyword id="KW-0554">One-carbon metabolism</keyword>
<keyword id="KW-0663">Pyridoxal phosphate</keyword>
<keyword id="KW-0808">Transferase</keyword>
<reference key="1">
    <citation type="journal article" date="2008" name="DNA Res.">
        <title>Determination of the genome sequence of Porphyromonas gingivalis strain ATCC 33277 and genomic comparison with strain W83 revealed extensive genome rearrangements in P. gingivalis.</title>
        <authorList>
            <person name="Naito M."/>
            <person name="Hirakawa H."/>
            <person name="Yamashita A."/>
            <person name="Ohara N."/>
            <person name="Shoji M."/>
            <person name="Yukitake H."/>
            <person name="Nakayama K."/>
            <person name="Toh H."/>
            <person name="Yoshimura F."/>
            <person name="Kuhara S."/>
            <person name="Hattori M."/>
            <person name="Hayashi T."/>
            <person name="Nakayama K."/>
        </authorList>
    </citation>
    <scope>NUCLEOTIDE SEQUENCE [LARGE SCALE GENOMIC DNA]</scope>
    <source>
        <strain>ATCC 33277 / DSM 20709 / CIP 103683 / JCM 12257 / NCTC 11834 / 2561</strain>
    </source>
</reference>